<sequence>MVFKAHHRSITRQDIELEDLENAPASIASIENDTLEANVGSTPLTAKQKRNIYFLILLYLIQGVPMGLVRGSIPYFLKPNVSYSDLATYSLAAYPYSLKVLWSPIVDTYYCRSFGRRKTWVVPCMLLISSTLLLFSYNVDTWISKGSSYINSFTTWSFLLVFVCATQDIAVDGWSLNMLNPEQLSYASTAQTVGLNTGFFLSFTILLVFTSPEFANTFIRSIPSNEGLITLSGYIKFWAYFTFIASVLVCFWDESNHQEIANISDMWKTIRAALSLKNMRQLLIVHTLGKVGFVANETLTLLKATEFGLSNEMLSLIILINFPLGLALGVYTGRISNYRPLDIWLKGYWGRVVSILLNTILVYMVSNWKHRFPVFFPIFLCYTLNASFSTIQFVALGVFHSKISDPHIGGTYMTILNTLSNLGGSWPQYVMLRMADLLTVSSCSTAPHLTCSADAQKKECQALGGTCLYKRDGYYLTSIVGIFLAISICVSLITPVVRRLTKAPISSWHIHSKIAETYT</sequence>
<reference key="1">
    <citation type="journal article" date="2002" name="Nature">
        <title>The genome sequence of Schizosaccharomyces pombe.</title>
        <authorList>
            <person name="Wood V."/>
            <person name="Gwilliam R."/>
            <person name="Rajandream M.A."/>
            <person name="Lyne M.H."/>
            <person name="Lyne R."/>
            <person name="Stewart A."/>
            <person name="Sgouros J.G."/>
            <person name="Peat N."/>
            <person name="Hayles J."/>
            <person name="Baker S.G."/>
            <person name="Basham D."/>
            <person name="Bowman S."/>
            <person name="Brooks K."/>
            <person name="Brown D."/>
            <person name="Brown S."/>
            <person name="Chillingworth T."/>
            <person name="Churcher C.M."/>
            <person name="Collins M."/>
            <person name="Connor R."/>
            <person name="Cronin A."/>
            <person name="Davis P."/>
            <person name="Feltwell T."/>
            <person name="Fraser A."/>
            <person name="Gentles S."/>
            <person name="Goble A."/>
            <person name="Hamlin N."/>
            <person name="Harris D.E."/>
            <person name="Hidalgo J."/>
            <person name="Hodgson G."/>
            <person name="Holroyd S."/>
            <person name="Hornsby T."/>
            <person name="Howarth S."/>
            <person name="Huckle E.J."/>
            <person name="Hunt S."/>
            <person name="Jagels K."/>
            <person name="James K.D."/>
            <person name="Jones L."/>
            <person name="Jones M."/>
            <person name="Leather S."/>
            <person name="McDonald S."/>
            <person name="McLean J."/>
            <person name="Mooney P."/>
            <person name="Moule S."/>
            <person name="Mungall K.L."/>
            <person name="Murphy L.D."/>
            <person name="Niblett D."/>
            <person name="Odell C."/>
            <person name="Oliver K."/>
            <person name="O'Neil S."/>
            <person name="Pearson D."/>
            <person name="Quail M.A."/>
            <person name="Rabbinowitsch E."/>
            <person name="Rutherford K.M."/>
            <person name="Rutter S."/>
            <person name="Saunders D."/>
            <person name="Seeger K."/>
            <person name="Sharp S."/>
            <person name="Skelton J."/>
            <person name="Simmonds M.N."/>
            <person name="Squares R."/>
            <person name="Squares S."/>
            <person name="Stevens K."/>
            <person name="Taylor K."/>
            <person name="Taylor R.G."/>
            <person name="Tivey A."/>
            <person name="Walsh S.V."/>
            <person name="Warren T."/>
            <person name="Whitehead S."/>
            <person name="Woodward J.R."/>
            <person name="Volckaert G."/>
            <person name="Aert R."/>
            <person name="Robben J."/>
            <person name="Grymonprez B."/>
            <person name="Weltjens I."/>
            <person name="Vanstreels E."/>
            <person name="Rieger M."/>
            <person name="Schaefer M."/>
            <person name="Mueller-Auer S."/>
            <person name="Gabel C."/>
            <person name="Fuchs M."/>
            <person name="Duesterhoeft A."/>
            <person name="Fritzc C."/>
            <person name="Holzer E."/>
            <person name="Moestl D."/>
            <person name="Hilbert H."/>
            <person name="Borzym K."/>
            <person name="Langer I."/>
            <person name="Beck A."/>
            <person name="Lehrach H."/>
            <person name="Reinhardt R."/>
            <person name="Pohl T.M."/>
            <person name="Eger P."/>
            <person name="Zimmermann W."/>
            <person name="Wedler H."/>
            <person name="Wambutt R."/>
            <person name="Purnelle B."/>
            <person name="Goffeau A."/>
            <person name="Cadieu E."/>
            <person name="Dreano S."/>
            <person name="Gloux S."/>
            <person name="Lelaure V."/>
            <person name="Mottier S."/>
            <person name="Galibert F."/>
            <person name="Aves S.J."/>
            <person name="Xiang Z."/>
            <person name="Hunt C."/>
            <person name="Moore K."/>
            <person name="Hurst S.M."/>
            <person name="Lucas M."/>
            <person name="Rochet M."/>
            <person name="Gaillardin C."/>
            <person name="Tallada V.A."/>
            <person name="Garzon A."/>
            <person name="Thode G."/>
            <person name="Daga R.R."/>
            <person name="Cruzado L."/>
            <person name="Jimenez J."/>
            <person name="Sanchez M."/>
            <person name="del Rey F."/>
            <person name="Benito J."/>
            <person name="Dominguez A."/>
            <person name="Revuelta J.L."/>
            <person name="Moreno S."/>
            <person name="Armstrong J."/>
            <person name="Forsburg S.L."/>
            <person name="Cerutti L."/>
            <person name="Lowe T."/>
            <person name="McCombie W.R."/>
            <person name="Paulsen I."/>
            <person name="Potashkin J."/>
            <person name="Shpakovski G.V."/>
            <person name="Ussery D."/>
            <person name="Barrell B.G."/>
            <person name="Nurse P."/>
        </authorList>
    </citation>
    <scope>NUCLEOTIDE SEQUENCE [LARGE SCALE GENOMIC DNA]</scope>
    <source>
        <strain>972 / ATCC 24843</strain>
    </source>
</reference>
<reference key="2">
    <citation type="journal article" date="2000" name="Genes Cells">
        <title>Large-scale screening of intracellular protein localization in living fission yeast cells by the use of a GFP-fusion genomic DNA library.</title>
        <authorList>
            <person name="Ding D.-Q."/>
            <person name="Tomita Y."/>
            <person name="Yamamoto A."/>
            <person name="Chikashige Y."/>
            <person name="Haraguchi T."/>
            <person name="Hiraoka Y."/>
        </authorList>
    </citation>
    <scope>NUCLEOTIDE SEQUENCE [LARGE SCALE GENOMIC DNA] OF 279-405</scope>
    <scope>SUBCELLULAR LOCATION</scope>
    <source>
        <strain>ATCC 38364 / 968</strain>
    </source>
</reference>
<comment type="subcellular location">
    <subcellularLocation>
        <location evidence="2">Membrane</location>
        <topology evidence="2">Multi-pass membrane protein</topology>
    </subcellularLocation>
</comment>
<protein>
    <recommendedName>
        <fullName>Uncharacterized protein C21B10.09</fullName>
    </recommendedName>
</protein>
<feature type="chain" id="PRO_0000116786" description="Uncharacterized protein C21B10.09">
    <location>
        <begin position="1"/>
        <end position="519"/>
    </location>
</feature>
<feature type="transmembrane region" description="Helical" evidence="1">
    <location>
        <begin position="52"/>
        <end position="72"/>
    </location>
</feature>
<feature type="transmembrane region" description="Helical" evidence="1">
    <location>
        <begin position="86"/>
        <end position="106"/>
    </location>
</feature>
<feature type="transmembrane region" description="Helical" evidence="1">
    <location>
        <begin position="119"/>
        <end position="139"/>
    </location>
</feature>
<feature type="transmembrane region" description="Helical" evidence="1">
    <location>
        <begin position="156"/>
        <end position="176"/>
    </location>
</feature>
<feature type="transmembrane region" description="Helical" evidence="1">
    <location>
        <begin position="199"/>
        <end position="219"/>
    </location>
</feature>
<feature type="transmembrane region" description="Helical" evidence="1">
    <location>
        <begin position="231"/>
        <end position="251"/>
    </location>
</feature>
<feature type="transmembrane region" description="Helical" evidence="1">
    <location>
        <begin position="313"/>
        <end position="333"/>
    </location>
</feature>
<feature type="transmembrane region" description="Helical" evidence="1">
    <location>
        <begin position="343"/>
        <end position="363"/>
    </location>
</feature>
<feature type="transmembrane region" description="Helical" evidence="1">
    <location>
        <begin position="374"/>
        <end position="394"/>
    </location>
</feature>
<feature type="transmembrane region" description="Helical" evidence="1">
    <location>
        <begin position="408"/>
        <end position="430"/>
    </location>
</feature>
<feature type="transmembrane region" description="Helical" evidence="1">
    <location>
        <begin position="477"/>
        <end position="497"/>
    </location>
</feature>
<dbReference type="EMBL" id="CU329671">
    <property type="protein sequence ID" value="CAB57921.1"/>
    <property type="molecule type" value="Genomic_DNA"/>
</dbReference>
<dbReference type="EMBL" id="AB027966">
    <property type="protein sequence ID" value="BAA87270.1"/>
    <property type="molecule type" value="Genomic_DNA"/>
</dbReference>
<dbReference type="PIR" id="T39918">
    <property type="entry name" value="T39918"/>
</dbReference>
<dbReference type="RefSeq" id="NP_595678.1">
    <property type="nucleotide sequence ID" value="NM_001021573.2"/>
</dbReference>
<dbReference type="FunCoup" id="Q9USW4">
    <property type="interactions" value="122"/>
</dbReference>
<dbReference type="STRING" id="284812.Q9USW4"/>
<dbReference type="PaxDb" id="4896-SPBC21B10.09.1"/>
<dbReference type="EnsemblFungi" id="SPBC21B10.09.1">
    <property type="protein sequence ID" value="SPBC21B10.09.1:pep"/>
    <property type="gene ID" value="SPBC21B10.09"/>
</dbReference>
<dbReference type="KEGG" id="spo:2540573"/>
<dbReference type="PomBase" id="SPBC21B10.09"/>
<dbReference type="VEuPathDB" id="FungiDB:SPBC21B10.09"/>
<dbReference type="eggNOG" id="KOG3574">
    <property type="taxonomic scope" value="Eukaryota"/>
</dbReference>
<dbReference type="HOGENOM" id="CLU_020502_2_0_1"/>
<dbReference type="InParanoid" id="Q9USW4"/>
<dbReference type="OMA" id="RRKSWIM"/>
<dbReference type="PhylomeDB" id="Q9USW4"/>
<dbReference type="Reactome" id="R-SPO-425397">
    <property type="pathway name" value="Transport of vitamins, nucleosides, and related molecules"/>
</dbReference>
<dbReference type="PRO" id="PR:Q9USW4"/>
<dbReference type="Proteomes" id="UP000002485">
    <property type="component" value="Chromosome II"/>
</dbReference>
<dbReference type="GO" id="GO:0005737">
    <property type="term" value="C:cytoplasm"/>
    <property type="evidence" value="ECO:0007005"/>
    <property type="project" value="PomBase"/>
</dbReference>
<dbReference type="GO" id="GO:0005794">
    <property type="term" value="C:Golgi apparatus"/>
    <property type="evidence" value="ECO:0007005"/>
    <property type="project" value="PomBase"/>
</dbReference>
<dbReference type="GO" id="GO:0016020">
    <property type="term" value="C:membrane"/>
    <property type="evidence" value="ECO:0000250"/>
    <property type="project" value="PomBase"/>
</dbReference>
<dbReference type="GO" id="GO:0008521">
    <property type="term" value="F:acetyl-CoA transmembrane transporter activity"/>
    <property type="evidence" value="ECO:0000250"/>
    <property type="project" value="PomBase"/>
</dbReference>
<dbReference type="GO" id="GO:0035348">
    <property type="term" value="P:acetyl-CoA transmembrane transport"/>
    <property type="evidence" value="ECO:0000250"/>
    <property type="project" value="PomBase"/>
</dbReference>
<dbReference type="FunFam" id="1.20.1250.20:FF:000289">
    <property type="entry name" value="Acetyl-coenzyme A transporter 1"/>
    <property type="match status" value="1"/>
</dbReference>
<dbReference type="Gene3D" id="1.20.1250.20">
    <property type="entry name" value="MFS general substrate transporter like domains"/>
    <property type="match status" value="1"/>
</dbReference>
<dbReference type="InterPro" id="IPR024371">
    <property type="entry name" value="AcetylCoA_trans_1-like"/>
</dbReference>
<dbReference type="InterPro" id="IPR004752">
    <property type="entry name" value="AmpG_permease/AT-1"/>
</dbReference>
<dbReference type="InterPro" id="IPR036259">
    <property type="entry name" value="MFS_trans_sf"/>
</dbReference>
<dbReference type="PANTHER" id="PTHR12778:SF9">
    <property type="entry name" value="ACETYL-COENZYME A TRANSPORTER 1"/>
    <property type="match status" value="1"/>
</dbReference>
<dbReference type="PANTHER" id="PTHR12778">
    <property type="entry name" value="SOLUTE CARRIER FAMILY 33 ACETYL-COA TRANSPORTER -RELATED"/>
    <property type="match status" value="1"/>
</dbReference>
<dbReference type="Pfam" id="PF13000">
    <property type="entry name" value="Acatn"/>
    <property type="match status" value="2"/>
</dbReference>
<dbReference type="SUPFAM" id="SSF103473">
    <property type="entry name" value="MFS general substrate transporter"/>
    <property type="match status" value="1"/>
</dbReference>
<proteinExistence type="predicted"/>
<organism>
    <name type="scientific">Schizosaccharomyces pombe (strain 972 / ATCC 24843)</name>
    <name type="common">Fission yeast</name>
    <dbReference type="NCBI Taxonomy" id="284812"/>
    <lineage>
        <taxon>Eukaryota</taxon>
        <taxon>Fungi</taxon>
        <taxon>Dikarya</taxon>
        <taxon>Ascomycota</taxon>
        <taxon>Taphrinomycotina</taxon>
        <taxon>Schizosaccharomycetes</taxon>
        <taxon>Schizosaccharomycetales</taxon>
        <taxon>Schizosaccharomycetaceae</taxon>
        <taxon>Schizosaccharomyces</taxon>
    </lineage>
</organism>
<accession>Q9USW4</accession>
<accession>Q9UTV9</accession>
<evidence type="ECO:0000255" key="1"/>
<evidence type="ECO:0000269" key="2">
    <source>
    </source>
</evidence>
<gene>
    <name type="ORF">SPBC21B10.09</name>
</gene>
<name>YHZ9_SCHPO</name>
<keyword id="KW-0472">Membrane</keyword>
<keyword id="KW-1185">Reference proteome</keyword>
<keyword id="KW-0812">Transmembrane</keyword>
<keyword id="KW-1133">Transmembrane helix</keyword>
<keyword id="KW-0813">Transport</keyword>